<protein>
    <recommendedName>
        <fullName evidence="1">Elongation factor 4</fullName>
        <shortName evidence="1">EF-4</shortName>
        <ecNumber evidence="1">3.6.5.n1</ecNumber>
    </recommendedName>
    <alternativeName>
        <fullName evidence="1">Ribosomal back-translocase LepA</fullName>
    </alternativeName>
</protein>
<reference key="1">
    <citation type="journal article" date="2010" name="Appl. Environ. Microbiol.">
        <title>The genome sequence of Psychrobacter arcticus 273-4, a psychroactive Siberian permafrost bacterium, reveals mechanisms for adaptation to low-temperature growth.</title>
        <authorList>
            <person name="Ayala-del-Rio H.L."/>
            <person name="Chain P.S."/>
            <person name="Grzymski J.J."/>
            <person name="Ponder M.A."/>
            <person name="Ivanova N."/>
            <person name="Bergholz P.W."/>
            <person name="Di Bartolo G."/>
            <person name="Hauser L."/>
            <person name="Land M."/>
            <person name="Bakermans C."/>
            <person name="Rodrigues D."/>
            <person name="Klappenbach J."/>
            <person name="Zarka D."/>
            <person name="Larimer F."/>
            <person name="Richardson P."/>
            <person name="Murray A."/>
            <person name="Thomashow M."/>
            <person name="Tiedje J.M."/>
        </authorList>
    </citation>
    <scope>NUCLEOTIDE SEQUENCE [LARGE SCALE GENOMIC DNA]</scope>
    <source>
        <strain>DSM 17307 / VKM B-2377 / 273-4</strain>
    </source>
</reference>
<organism>
    <name type="scientific">Psychrobacter arcticus (strain DSM 17307 / VKM B-2377 / 273-4)</name>
    <dbReference type="NCBI Taxonomy" id="259536"/>
    <lineage>
        <taxon>Bacteria</taxon>
        <taxon>Pseudomonadati</taxon>
        <taxon>Pseudomonadota</taxon>
        <taxon>Gammaproteobacteria</taxon>
        <taxon>Moraxellales</taxon>
        <taxon>Moraxellaceae</taxon>
        <taxon>Psychrobacter</taxon>
    </lineage>
</organism>
<gene>
    <name evidence="1" type="primary">lepA</name>
    <name type="ordered locus">Psyc_0330</name>
</gene>
<sequence>MTALANIRNFSIIAHIDHGKSTLADRFIQMCGALQDREMQAQVLDSMDIERERGITIKAQSVTLYYDHPNGERYQLNFIDTPGHVDFSYEVSRSLAACEGALLVVDAAQGVEAQSVANCYTAVDQGLEVMAVLNKIDLPQVEPERVIQEIEDIIGIDAVDAPRVSAKSGLGVDKLLEALVEFIPAPTGDRDAPLQALIIDSWFDNYLGVVSLVRVRQGTIKKGDKLYIKSTKDAHLVGSIGVFTPKPLDTGILEAGEVGFIIAGIKDIAGAPVGDTITHASTPDVDCIPGFKQITPQVYAGMFPVESTDFEKFREALQKLQINDASLFFEPDTSDALGFGFRCGFLGMLHMEIIQERLEREYDLDLITTAPSVIYEIVKKDGSIIYVDNPSRLPEPNNIEEFREPIARCQILVPQDYLGNVMTLCIERRGVQVDMRFMGRQVQLIFDIPMGEVVMDFFDRLKSVSRGFASLDYNFERYQVDKLVKVDVLINGDKVDALAMIVHETQSRYRGNALVSKMKELIPRQMFDVAIQAAIGSQIIGRSTVKAMRKDVLAKCYGGDVSRKKKLLSKQKAGKKRMKQVGNVEIPQEAFLAVLQVD</sequence>
<accession>Q4FUV9</accession>
<name>LEPA_PSYA2</name>
<keyword id="KW-0997">Cell inner membrane</keyword>
<keyword id="KW-1003">Cell membrane</keyword>
<keyword id="KW-0342">GTP-binding</keyword>
<keyword id="KW-0378">Hydrolase</keyword>
<keyword id="KW-0472">Membrane</keyword>
<keyword id="KW-0547">Nucleotide-binding</keyword>
<keyword id="KW-0648">Protein biosynthesis</keyword>
<keyword id="KW-1185">Reference proteome</keyword>
<feature type="chain" id="PRO_0000224788" description="Elongation factor 4">
    <location>
        <begin position="1"/>
        <end position="598"/>
    </location>
</feature>
<feature type="domain" description="tr-type G">
    <location>
        <begin position="5"/>
        <end position="187"/>
    </location>
</feature>
<feature type="binding site" evidence="1">
    <location>
        <begin position="17"/>
        <end position="22"/>
    </location>
    <ligand>
        <name>GTP</name>
        <dbReference type="ChEBI" id="CHEBI:37565"/>
    </ligand>
</feature>
<feature type="binding site" evidence="1">
    <location>
        <begin position="134"/>
        <end position="137"/>
    </location>
    <ligand>
        <name>GTP</name>
        <dbReference type="ChEBI" id="CHEBI:37565"/>
    </ligand>
</feature>
<evidence type="ECO:0000255" key="1">
    <source>
        <dbReference type="HAMAP-Rule" id="MF_00071"/>
    </source>
</evidence>
<dbReference type="EC" id="3.6.5.n1" evidence="1"/>
<dbReference type="EMBL" id="CP000082">
    <property type="protein sequence ID" value="AAZ18199.1"/>
    <property type="molecule type" value="Genomic_DNA"/>
</dbReference>
<dbReference type="RefSeq" id="WP_011279637.1">
    <property type="nucleotide sequence ID" value="NC_007204.1"/>
</dbReference>
<dbReference type="SMR" id="Q4FUV9"/>
<dbReference type="STRING" id="259536.Psyc_0330"/>
<dbReference type="KEGG" id="par:Psyc_0330"/>
<dbReference type="eggNOG" id="COG0481">
    <property type="taxonomic scope" value="Bacteria"/>
</dbReference>
<dbReference type="HOGENOM" id="CLU_009995_3_3_6"/>
<dbReference type="OrthoDB" id="9801472at2"/>
<dbReference type="Proteomes" id="UP000000546">
    <property type="component" value="Chromosome"/>
</dbReference>
<dbReference type="GO" id="GO:0005886">
    <property type="term" value="C:plasma membrane"/>
    <property type="evidence" value="ECO:0007669"/>
    <property type="project" value="UniProtKB-SubCell"/>
</dbReference>
<dbReference type="GO" id="GO:0005525">
    <property type="term" value="F:GTP binding"/>
    <property type="evidence" value="ECO:0007669"/>
    <property type="project" value="UniProtKB-UniRule"/>
</dbReference>
<dbReference type="GO" id="GO:0003924">
    <property type="term" value="F:GTPase activity"/>
    <property type="evidence" value="ECO:0007669"/>
    <property type="project" value="UniProtKB-UniRule"/>
</dbReference>
<dbReference type="GO" id="GO:0097216">
    <property type="term" value="F:guanosine tetraphosphate binding"/>
    <property type="evidence" value="ECO:0007669"/>
    <property type="project" value="UniProtKB-ARBA"/>
</dbReference>
<dbReference type="GO" id="GO:0043022">
    <property type="term" value="F:ribosome binding"/>
    <property type="evidence" value="ECO:0007669"/>
    <property type="project" value="UniProtKB-UniRule"/>
</dbReference>
<dbReference type="GO" id="GO:0003746">
    <property type="term" value="F:translation elongation factor activity"/>
    <property type="evidence" value="ECO:0007669"/>
    <property type="project" value="UniProtKB-UniRule"/>
</dbReference>
<dbReference type="GO" id="GO:0045727">
    <property type="term" value="P:positive regulation of translation"/>
    <property type="evidence" value="ECO:0007669"/>
    <property type="project" value="UniProtKB-UniRule"/>
</dbReference>
<dbReference type="CDD" id="cd03699">
    <property type="entry name" value="EF4_II"/>
    <property type="match status" value="1"/>
</dbReference>
<dbReference type="CDD" id="cd16260">
    <property type="entry name" value="EF4_III"/>
    <property type="match status" value="1"/>
</dbReference>
<dbReference type="CDD" id="cd01890">
    <property type="entry name" value="LepA"/>
    <property type="match status" value="1"/>
</dbReference>
<dbReference type="CDD" id="cd03709">
    <property type="entry name" value="lepA_C"/>
    <property type="match status" value="1"/>
</dbReference>
<dbReference type="FunFam" id="3.40.50.300:FF:000078">
    <property type="entry name" value="Elongation factor 4"/>
    <property type="match status" value="1"/>
</dbReference>
<dbReference type="FunFam" id="2.40.30.10:FF:000015">
    <property type="entry name" value="Translation factor GUF1, mitochondrial"/>
    <property type="match status" value="1"/>
</dbReference>
<dbReference type="FunFam" id="3.30.70.240:FF:000007">
    <property type="entry name" value="Translation factor GUF1, mitochondrial"/>
    <property type="match status" value="1"/>
</dbReference>
<dbReference type="FunFam" id="3.30.70.2570:FF:000001">
    <property type="entry name" value="Translation factor GUF1, mitochondrial"/>
    <property type="match status" value="1"/>
</dbReference>
<dbReference type="FunFam" id="3.30.70.870:FF:000004">
    <property type="entry name" value="Translation factor GUF1, mitochondrial"/>
    <property type="match status" value="1"/>
</dbReference>
<dbReference type="Gene3D" id="3.30.70.240">
    <property type="match status" value="1"/>
</dbReference>
<dbReference type="Gene3D" id="3.30.70.2570">
    <property type="entry name" value="Elongation factor 4, C-terminal domain"/>
    <property type="match status" value="1"/>
</dbReference>
<dbReference type="Gene3D" id="3.30.70.870">
    <property type="entry name" value="Elongation Factor G (Translational Gtpase), domain 3"/>
    <property type="match status" value="1"/>
</dbReference>
<dbReference type="Gene3D" id="3.40.50.300">
    <property type="entry name" value="P-loop containing nucleotide triphosphate hydrolases"/>
    <property type="match status" value="1"/>
</dbReference>
<dbReference type="Gene3D" id="2.40.30.10">
    <property type="entry name" value="Translation factors"/>
    <property type="match status" value="1"/>
</dbReference>
<dbReference type="HAMAP" id="MF_00071">
    <property type="entry name" value="LepA"/>
    <property type="match status" value="1"/>
</dbReference>
<dbReference type="InterPro" id="IPR006297">
    <property type="entry name" value="EF-4"/>
</dbReference>
<dbReference type="InterPro" id="IPR035647">
    <property type="entry name" value="EFG_III/V"/>
</dbReference>
<dbReference type="InterPro" id="IPR000640">
    <property type="entry name" value="EFG_V-like"/>
</dbReference>
<dbReference type="InterPro" id="IPR004161">
    <property type="entry name" value="EFTu-like_2"/>
</dbReference>
<dbReference type="InterPro" id="IPR031157">
    <property type="entry name" value="G_TR_CS"/>
</dbReference>
<dbReference type="InterPro" id="IPR038363">
    <property type="entry name" value="LepA_C_sf"/>
</dbReference>
<dbReference type="InterPro" id="IPR013842">
    <property type="entry name" value="LepA_CTD"/>
</dbReference>
<dbReference type="InterPro" id="IPR035654">
    <property type="entry name" value="LepA_IV"/>
</dbReference>
<dbReference type="InterPro" id="IPR027417">
    <property type="entry name" value="P-loop_NTPase"/>
</dbReference>
<dbReference type="InterPro" id="IPR005225">
    <property type="entry name" value="Small_GTP-bd"/>
</dbReference>
<dbReference type="InterPro" id="IPR000795">
    <property type="entry name" value="T_Tr_GTP-bd_dom"/>
</dbReference>
<dbReference type="NCBIfam" id="TIGR01393">
    <property type="entry name" value="lepA"/>
    <property type="match status" value="1"/>
</dbReference>
<dbReference type="NCBIfam" id="TIGR00231">
    <property type="entry name" value="small_GTP"/>
    <property type="match status" value="1"/>
</dbReference>
<dbReference type="PANTHER" id="PTHR43512:SF4">
    <property type="entry name" value="TRANSLATION FACTOR GUF1 HOMOLOG, CHLOROPLASTIC"/>
    <property type="match status" value="1"/>
</dbReference>
<dbReference type="PANTHER" id="PTHR43512">
    <property type="entry name" value="TRANSLATION FACTOR GUF1-RELATED"/>
    <property type="match status" value="1"/>
</dbReference>
<dbReference type="Pfam" id="PF00679">
    <property type="entry name" value="EFG_C"/>
    <property type="match status" value="1"/>
</dbReference>
<dbReference type="Pfam" id="PF00009">
    <property type="entry name" value="GTP_EFTU"/>
    <property type="match status" value="1"/>
</dbReference>
<dbReference type="Pfam" id="PF03144">
    <property type="entry name" value="GTP_EFTU_D2"/>
    <property type="match status" value="1"/>
</dbReference>
<dbReference type="Pfam" id="PF06421">
    <property type="entry name" value="LepA_C"/>
    <property type="match status" value="1"/>
</dbReference>
<dbReference type="PRINTS" id="PR00315">
    <property type="entry name" value="ELONGATNFCT"/>
</dbReference>
<dbReference type="SUPFAM" id="SSF54980">
    <property type="entry name" value="EF-G C-terminal domain-like"/>
    <property type="match status" value="2"/>
</dbReference>
<dbReference type="SUPFAM" id="SSF52540">
    <property type="entry name" value="P-loop containing nucleoside triphosphate hydrolases"/>
    <property type="match status" value="1"/>
</dbReference>
<dbReference type="PROSITE" id="PS00301">
    <property type="entry name" value="G_TR_1"/>
    <property type="match status" value="1"/>
</dbReference>
<dbReference type="PROSITE" id="PS51722">
    <property type="entry name" value="G_TR_2"/>
    <property type="match status" value="1"/>
</dbReference>
<proteinExistence type="inferred from homology"/>
<comment type="function">
    <text evidence="1">Required for accurate and efficient protein synthesis under certain stress conditions. May act as a fidelity factor of the translation reaction, by catalyzing a one-codon backward translocation of tRNAs on improperly translocated ribosomes. Back-translocation proceeds from a post-translocation (POST) complex to a pre-translocation (PRE) complex, thus giving elongation factor G a second chance to translocate the tRNAs correctly. Binds to ribosomes in a GTP-dependent manner.</text>
</comment>
<comment type="catalytic activity">
    <reaction evidence="1">
        <text>GTP + H2O = GDP + phosphate + H(+)</text>
        <dbReference type="Rhea" id="RHEA:19669"/>
        <dbReference type="ChEBI" id="CHEBI:15377"/>
        <dbReference type="ChEBI" id="CHEBI:15378"/>
        <dbReference type="ChEBI" id="CHEBI:37565"/>
        <dbReference type="ChEBI" id="CHEBI:43474"/>
        <dbReference type="ChEBI" id="CHEBI:58189"/>
        <dbReference type="EC" id="3.6.5.n1"/>
    </reaction>
</comment>
<comment type="subcellular location">
    <subcellularLocation>
        <location evidence="1">Cell inner membrane</location>
        <topology evidence="1">Peripheral membrane protein</topology>
        <orientation evidence="1">Cytoplasmic side</orientation>
    </subcellularLocation>
</comment>
<comment type="similarity">
    <text evidence="1">Belongs to the TRAFAC class translation factor GTPase superfamily. Classic translation factor GTPase family. LepA subfamily.</text>
</comment>